<gene>
    <name evidence="1" type="primary">deoC</name>
    <name type="ordered locus">EC55989_5043</name>
</gene>
<name>DEOC_ECO55</name>
<accession>B7LEM7</accession>
<organism>
    <name type="scientific">Escherichia coli (strain 55989 / EAEC)</name>
    <dbReference type="NCBI Taxonomy" id="585055"/>
    <lineage>
        <taxon>Bacteria</taxon>
        <taxon>Pseudomonadati</taxon>
        <taxon>Pseudomonadota</taxon>
        <taxon>Gammaproteobacteria</taxon>
        <taxon>Enterobacterales</taxon>
        <taxon>Enterobacteriaceae</taxon>
        <taxon>Escherichia</taxon>
    </lineage>
</organism>
<keyword id="KW-0963">Cytoplasm</keyword>
<keyword id="KW-0456">Lyase</keyword>
<keyword id="KW-1185">Reference proteome</keyword>
<keyword id="KW-0704">Schiff base</keyword>
<comment type="function">
    <text evidence="1">Catalyzes a reversible aldol reaction between acetaldehyde and D-glyceraldehyde 3-phosphate to generate 2-deoxy-D-ribose 5-phosphate.</text>
</comment>
<comment type="catalytic activity">
    <reaction evidence="1">
        <text>2-deoxy-D-ribose 5-phosphate = D-glyceraldehyde 3-phosphate + acetaldehyde</text>
        <dbReference type="Rhea" id="RHEA:12821"/>
        <dbReference type="ChEBI" id="CHEBI:15343"/>
        <dbReference type="ChEBI" id="CHEBI:59776"/>
        <dbReference type="ChEBI" id="CHEBI:62877"/>
        <dbReference type="EC" id="4.1.2.4"/>
    </reaction>
</comment>
<comment type="pathway">
    <text evidence="1">Carbohydrate degradation; 2-deoxy-D-ribose 1-phosphate degradation; D-glyceraldehyde 3-phosphate and acetaldehyde from 2-deoxy-alpha-D-ribose 1-phosphate: step 2/2.</text>
</comment>
<comment type="subcellular location">
    <subcellularLocation>
        <location evidence="1">Cytoplasm</location>
    </subcellularLocation>
</comment>
<comment type="similarity">
    <text evidence="1">Belongs to the DeoC/FbaB aldolase family. DeoC type 2 subfamily.</text>
</comment>
<evidence type="ECO:0000255" key="1">
    <source>
        <dbReference type="HAMAP-Rule" id="MF_00592"/>
    </source>
</evidence>
<dbReference type="EC" id="4.1.2.4" evidence="1"/>
<dbReference type="EMBL" id="CU928145">
    <property type="protein sequence ID" value="CAV02181.1"/>
    <property type="molecule type" value="Genomic_DNA"/>
</dbReference>
<dbReference type="RefSeq" id="WP_001295412.1">
    <property type="nucleotide sequence ID" value="NZ_CP028304.1"/>
</dbReference>
<dbReference type="SMR" id="B7LEM7"/>
<dbReference type="GeneID" id="93777463"/>
<dbReference type="KEGG" id="eck:EC55989_5043"/>
<dbReference type="HOGENOM" id="CLU_053595_3_1_6"/>
<dbReference type="UniPathway" id="UPA00002">
    <property type="reaction ID" value="UER00468"/>
</dbReference>
<dbReference type="Proteomes" id="UP000000746">
    <property type="component" value="Chromosome"/>
</dbReference>
<dbReference type="GO" id="GO:0005737">
    <property type="term" value="C:cytoplasm"/>
    <property type="evidence" value="ECO:0007669"/>
    <property type="project" value="UniProtKB-SubCell"/>
</dbReference>
<dbReference type="GO" id="GO:0004139">
    <property type="term" value="F:deoxyribose-phosphate aldolase activity"/>
    <property type="evidence" value="ECO:0007669"/>
    <property type="project" value="UniProtKB-UniRule"/>
</dbReference>
<dbReference type="GO" id="GO:0006018">
    <property type="term" value="P:2-deoxyribose 1-phosphate catabolic process"/>
    <property type="evidence" value="ECO:0007669"/>
    <property type="project" value="UniProtKB-UniRule"/>
</dbReference>
<dbReference type="GO" id="GO:0016052">
    <property type="term" value="P:carbohydrate catabolic process"/>
    <property type="evidence" value="ECO:0007669"/>
    <property type="project" value="TreeGrafter"/>
</dbReference>
<dbReference type="GO" id="GO:0009264">
    <property type="term" value="P:deoxyribonucleotide catabolic process"/>
    <property type="evidence" value="ECO:0007669"/>
    <property type="project" value="InterPro"/>
</dbReference>
<dbReference type="CDD" id="cd00959">
    <property type="entry name" value="DeoC"/>
    <property type="match status" value="1"/>
</dbReference>
<dbReference type="FunFam" id="3.20.20.70:FF:000034">
    <property type="entry name" value="Deoxyribose-phosphate aldolase"/>
    <property type="match status" value="1"/>
</dbReference>
<dbReference type="Gene3D" id="3.20.20.70">
    <property type="entry name" value="Aldolase class I"/>
    <property type="match status" value="1"/>
</dbReference>
<dbReference type="HAMAP" id="MF_00592">
    <property type="entry name" value="DeoC_type2"/>
    <property type="match status" value="1"/>
</dbReference>
<dbReference type="InterPro" id="IPR013785">
    <property type="entry name" value="Aldolase_TIM"/>
</dbReference>
<dbReference type="InterPro" id="IPR011343">
    <property type="entry name" value="DeoC"/>
</dbReference>
<dbReference type="InterPro" id="IPR002915">
    <property type="entry name" value="DeoC/FbaB/LacD_aldolase"/>
</dbReference>
<dbReference type="InterPro" id="IPR023649">
    <property type="entry name" value="DeoC_typeII"/>
</dbReference>
<dbReference type="NCBIfam" id="TIGR00126">
    <property type="entry name" value="deoC"/>
    <property type="match status" value="1"/>
</dbReference>
<dbReference type="PANTHER" id="PTHR10889">
    <property type="entry name" value="DEOXYRIBOSE-PHOSPHATE ALDOLASE"/>
    <property type="match status" value="1"/>
</dbReference>
<dbReference type="PANTHER" id="PTHR10889:SF3">
    <property type="entry name" value="DEOXYRIBOSE-PHOSPHATE ALDOLASE"/>
    <property type="match status" value="1"/>
</dbReference>
<dbReference type="Pfam" id="PF01791">
    <property type="entry name" value="DeoC"/>
    <property type="match status" value="1"/>
</dbReference>
<dbReference type="PIRSF" id="PIRSF001357">
    <property type="entry name" value="DeoC"/>
    <property type="match status" value="1"/>
</dbReference>
<dbReference type="SMART" id="SM01133">
    <property type="entry name" value="DeoC"/>
    <property type="match status" value="1"/>
</dbReference>
<dbReference type="SUPFAM" id="SSF51569">
    <property type="entry name" value="Aldolase"/>
    <property type="match status" value="1"/>
</dbReference>
<reference key="1">
    <citation type="journal article" date="2009" name="PLoS Genet.">
        <title>Organised genome dynamics in the Escherichia coli species results in highly diverse adaptive paths.</title>
        <authorList>
            <person name="Touchon M."/>
            <person name="Hoede C."/>
            <person name="Tenaillon O."/>
            <person name="Barbe V."/>
            <person name="Baeriswyl S."/>
            <person name="Bidet P."/>
            <person name="Bingen E."/>
            <person name="Bonacorsi S."/>
            <person name="Bouchier C."/>
            <person name="Bouvet O."/>
            <person name="Calteau A."/>
            <person name="Chiapello H."/>
            <person name="Clermont O."/>
            <person name="Cruveiller S."/>
            <person name="Danchin A."/>
            <person name="Diard M."/>
            <person name="Dossat C."/>
            <person name="Karoui M.E."/>
            <person name="Frapy E."/>
            <person name="Garry L."/>
            <person name="Ghigo J.M."/>
            <person name="Gilles A.M."/>
            <person name="Johnson J."/>
            <person name="Le Bouguenec C."/>
            <person name="Lescat M."/>
            <person name="Mangenot S."/>
            <person name="Martinez-Jehanne V."/>
            <person name="Matic I."/>
            <person name="Nassif X."/>
            <person name="Oztas S."/>
            <person name="Petit M.A."/>
            <person name="Pichon C."/>
            <person name="Rouy Z."/>
            <person name="Ruf C.S."/>
            <person name="Schneider D."/>
            <person name="Tourret J."/>
            <person name="Vacherie B."/>
            <person name="Vallenet D."/>
            <person name="Medigue C."/>
            <person name="Rocha E.P.C."/>
            <person name="Denamur E."/>
        </authorList>
    </citation>
    <scope>NUCLEOTIDE SEQUENCE [LARGE SCALE GENOMIC DNA]</scope>
    <source>
        <strain>55989 / EAEC</strain>
    </source>
</reference>
<feature type="chain" id="PRO_1000146962" description="Deoxyribose-phosphate aldolase">
    <location>
        <begin position="1"/>
        <end position="259"/>
    </location>
</feature>
<feature type="active site" description="Proton donor/acceptor" evidence="1">
    <location>
        <position position="102"/>
    </location>
</feature>
<feature type="active site" description="Schiff-base intermediate with acetaldehyde" evidence="1">
    <location>
        <position position="167"/>
    </location>
</feature>
<feature type="active site" description="Proton donor/acceptor" evidence="1">
    <location>
        <position position="201"/>
    </location>
</feature>
<protein>
    <recommendedName>
        <fullName evidence="1">Deoxyribose-phosphate aldolase</fullName>
        <shortName evidence="1">DERA</shortName>
        <ecNumber evidence="1">4.1.2.4</ecNumber>
    </recommendedName>
    <alternativeName>
        <fullName evidence="1">2-deoxy-D-ribose 5-phosphate aldolase</fullName>
    </alternativeName>
    <alternativeName>
        <fullName evidence="1">Phosphodeoxyriboaldolase</fullName>
        <shortName evidence="1">Deoxyriboaldolase</shortName>
    </alternativeName>
</protein>
<sequence length="259" mass="27748">MTDLKASSLRALKLMDLTTLNDDDTDEKVIALCHQAKTPVGNTAAICIYPRFIPIARKTLKEQGTPEIRIATVTNFPHGNDDIEIALAETRAAIAYGADEVDVVFPYRALMAGNEQVGFDLVKACKEACAAANVLLKVIIETGELKDEALIRKASEISIKAGADFIKTSTGKVAVNATPESARIMMEVIRDMGVEKTVGFKPAGGVRTAEDAQKYLAIADELFGADWADARHYRFGASSLLASLLKALGHGDGKSASSY</sequence>
<proteinExistence type="inferred from homology"/>